<protein>
    <recommendedName>
        <fullName evidence="1">Trigger factor</fullName>
        <shortName evidence="1">TF</shortName>
        <ecNumber evidence="1">5.2.1.8</ecNumber>
    </recommendedName>
    <alternativeName>
        <fullName evidence="1">PPIase</fullName>
    </alternativeName>
</protein>
<evidence type="ECO:0000255" key="1">
    <source>
        <dbReference type="HAMAP-Rule" id="MF_00303"/>
    </source>
</evidence>
<organism>
    <name type="scientific">Shewanella sp. (strain ANA-3)</name>
    <dbReference type="NCBI Taxonomy" id="94122"/>
    <lineage>
        <taxon>Bacteria</taxon>
        <taxon>Pseudomonadati</taxon>
        <taxon>Pseudomonadota</taxon>
        <taxon>Gammaproteobacteria</taxon>
        <taxon>Alteromonadales</taxon>
        <taxon>Shewanellaceae</taxon>
        <taxon>Shewanella</taxon>
    </lineage>
</organism>
<gene>
    <name evidence="1" type="primary">tig</name>
    <name type="ordered locus">Shewana3_2662</name>
</gene>
<comment type="function">
    <text evidence="1">Involved in protein export. Acts as a chaperone by maintaining the newly synthesized protein in an open conformation. Functions as a peptidyl-prolyl cis-trans isomerase.</text>
</comment>
<comment type="catalytic activity">
    <reaction evidence="1">
        <text>[protein]-peptidylproline (omega=180) = [protein]-peptidylproline (omega=0)</text>
        <dbReference type="Rhea" id="RHEA:16237"/>
        <dbReference type="Rhea" id="RHEA-COMP:10747"/>
        <dbReference type="Rhea" id="RHEA-COMP:10748"/>
        <dbReference type="ChEBI" id="CHEBI:83833"/>
        <dbReference type="ChEBI" id="CHEBI:83834"/>
        <dbReference type="EC" id="5.2.1.8"/>
    </reaction>
</comment>
<comment type="subcellular location">
    <subcellularLocation>
        <location>Cytoplasm</location>
    </subcellularLocation>
    <text evidence="1">About half TF is bound to the ribosome near the polypeptide exit tunnel while the other half is free in the cytoplasm.</text>
</comment>
<comment type="domain">
    <text evidence="1">Consists of 3 domains; the N-terminus binds the ribosome, the middle domain has PPIase activity, while the C-terminus has intrinsic chaperone activity on its own.</text>
</comment>
<comment type="similarity">
    <text evidence="1">Belongs to the FKBP-type PPIase family. Tig subfamily.</text>
</comment>
<dbReference type="EC" id="5.2.1.8" evidence="1"/>
<dbReference type="EMBL" id="CP000469">
    <property type="protein sequence ID" value="ABK48889.1"/>
    <property type="molecule type" value="Genomic_DNA"/>
</dbReference>
<dbReference type="RefSeq" id="WP_011717551.1">
    <property type="nucleotide sequence ID" value="NC_008577.1"/>
</dbReference>
<dbReference type="SMR" id="A0KYM0"/>
<dbReference type="STRING" id="94122.Shewana3_2662"/>
<dbReference type="KEGG" id="shn:Shewana3_2662"/>
<dbReference type="eggNOG" id="COG0544">
    <property type="taxonomic scope" value="Bacteria"/>
</dbReference>
<dbReference type="HOGENOM" id="CLU_033058_2_0_6"/>
<dbReference type="OrthoDB" id="9767721at2"/>
<dbReference type="Proteomes" id="UP000002589">
    <property type="component" value="Chromosome"/>
</dbReference>
<dbReference type="GO" id="GO:0005737">
    <property type="term" value="C:cytoplasm"/>
    <property type="evidence" value="ECO:0007669"/>
    <property type="project" value="UniProtKB-SubCell"/>
</dbReference>
<dbReference type="GO" id="GO:0003755">
    <property type="term" value="F:peptidyl-prolyl cis-trans isomerase activity"/>
    <property type="evidence" value="ECO:0007669"/>
    <property type="project" value="UniProtKB-UniRule"/>
</dbReference>
<dbReference type="GO" id="GO:0044183">
    <property type="term" value="F:protein folding chaperone"/>
    <property type="evidence" value="ECO:0007669"/>
    <property type="project" value="TreeGrafter"/>
</dbReference>
<dbReference type="GO" id="GO:0043022">
    <property type="term" value="F:ribosome binding"/>
    <property type="evidence" value="ECO:0007669"/>
    <property type="project" value="TreeGrafter"/>
</dbReference>
<dbReference type="GO" id="GO:0051083">
    <property type="term" value="P:'de novo' cotranslational protein folding"/>
    <property type="evidence" value="ECO:0007669"/>
    <property type="project" value="TreeGrafter"/>
</dbReference>
<dbReference type="GO" id="GO:0051301">
    <property type="term" value="P:cell division"/>
    <property type="evidence" value="ECO:0007669"/>
    <property type="project" value="UniProtKB-KW"/>
</dbReference>
<dbReference type="GO" id="GO:0061077">
    <property type="term" value="P:chaperone-mediated protein folding"/>
    <property type="evidence" value="ECO:0007669"/>
    <property type="project" value="TreeGrafter"/>
</dbReference>
<dbReference type="GO" id="GO:0015031">
    <property type="term" value="P:protein transport"/>
    <property type="evidence" value="ECO:0007669"/>
    <property type="project" value="UniProtKB-UniRule"/>
</dbReference>
<dbReference type="GO" id="GO:0043335">
    <property type="term" value="P:protein unfolding"/>
    <property type="evidence" value="ECO:0007669"/>
    <property type="project" value="TreeGrafter"/>
</dbReference>
<dbReference type="FunFam" id="3.10.50.40:FF:000001">
    <property type="entry name" value="Trigger factor"/>
    <property type="match status" value="1"/>
</dbReference>
<dbReference type="Gene3D" id="3.10.50.40">
    <property type="match status" value="1"/>
</dbReference>
<dbReference type="Gene3D" id="3.30.70.1050">
    <property type="entry name" value="Trigger factor ribosome-binding domain"/>
    <property type="match status" value="1"/>
</dbReference>
<dbReference type="Gene3D" id="1.10.3120.10">
    <property type="entry name" value="Trigger factor, C-terminal domain"/>
    <property type="match status" value="1"/>
</dbReference>
<dbReference type="HAMAP" id="MF_00303">
    <property type="entry name" value="Trigger_factor_Tig"/>
    <property type="match status" value="1"/>
</dbReference>
<dbReference type="InterPro" id="IPR046357">
    <property type="entry name" value="PPIase_dom_sf"/>
</dbReference>
<dbReference type="InterPro" id="IPR001179">
    <property type="entry name" value="PPIase_FKBP_dom"/>
</dbReference>
<dbReference type="InterPro" id="IPR005215">
    <property type="entry name" value="Trig_fac"/>
</dbReference>
<dbReference type="InterPro" id="IPR008880">
    <property type="entry name" value="Trigger_fac_C"/>
</dbReference>
<dbReference type="InterPro" id="IPR037041">
    <property type="entry name" value="Trigger_fac_C_sf"/>
</dbReference>
<dbReference type="InterPro" id="IPR008881">
    <property type="entry name" value="Trigger_fac_ribosome-bd_bac"/>
</dbReference>
<dbReference type="InterPro" id="IPR036611">
    <property type="entry name" value="Trigger_fac_ribosome-bd_sf"/>
</dbReference>
<dbReference type="InterPro" id="IPR027304">
    <property type="entry name" value="Trigger_fact/SurA_dom_sf"/>
</dbReference>
<dbReference type="NCBIfam" id="TIGR00115">
    <property type="entry name" value="tig"/>
    <property type="match status" value="1"/>
</dbReference>
<dbReference type="PANTHER" id="PTHR30560">
    <property type="entry name" value="TRIGGER FACTOR CHAPERONE AND PEPTIDYL-PROLYL CIS/TRANS ISOMERASE"/>
    <property type="match status" value="1"/>
</dbReference>
<dbReference type="PANTHER" id="PTHR30560:SF3">
    <property type="entry name" value="TRIGGER FACTOR-LIKE PROTEIN TIG, CHLOROPLASTIC"/>
    <property type="match status" value="1"/>
</dbReference>
<dbReference type="Pfam" id="PF00254">
    <property type="entry name" value="FKBP_C"/>
    <property type="match status" value="1"/>
</dbReference>
<dbReference type="Pfam" id="PF05698">
    <property type="entry name" value="Trigger_C"/>
    <property type="match status" value="1"/>
</dbReference>
<dbReference type="Pfam" id="PF05697">
    <property type="entry name" value="Trigger_N"/>
    <property type="match status" value="1"/>
</dbReference>
<dbReference type="PIRSF" id="PIRSF003095">
    <property type="entry name" value="Trigger_factor"/>
    <property type="match status" value="1"/>
</dbReference>
<dbReference type="SUPFAM" id="SSF54534">
    <property type="entry name" value="FKBP-like"/>
    <property type="match status" value="1"/>
</dbReference>
<dbReference type="SUPFAM" id="SSF109998">
    <property type="entry name" value="Triger factor/SurA peptide-binding domain-like"/>
    <property type="match status" value="1"/>
</dbReference>
<dbReference type="SUPFAM" id="SSF102735">
    <property type="entry name" value="Trigger factor ribosome-binding domain"/>
    <property type="match status" value="1"/>
</dbReference>
<dbReference type="PROSITE" id="PS50059">
    <property type="entry name" value="FKBP_PPIASE"/>
    <property type="match status" value="1"/>
</dbReference>
<name>TIG_SHESA</name>
<accession>A0KYM0</accession>
<keyword id="KW-0131">Cell cycle</keyword>
<keyword id="KW-0132">Cell division</keyword>
<keyword id="KW-0143">Chaperone</keyword>
<keyword id="KW-0963">Cytoplasm</keyword>
<keyword id="KW-0413">Isomerase</keyword>
<keyword id="KW-0697">Rotamase</keyword>
<proteinExistence type="inferred from homology"/>
<reference key="1">
    <citation type="submission" date="2006-09" db="EMBL/GenBank/DDBJ databases">
        <title>Complete sequence of chromosome 1 of Shewanella sp. ANA-3.</title>
        <authorList>
            <person name="Copeland A."/>
            <person name="Lucas S."/>
            <person name="Lapidus A."/>
            <person name="Barry K."/>
            <person name="Detter J.C."/>
            <person name="Glavina del Rio T."/>
            <person name="Hammon N."/>
            <person name="Israni S."/>
            <person name="Dalin E."/>
            <person name="Tice H."/>
            <person name="Pitluck S."/>
            <person name="Chertkov O."/>
            <person name="Brettin T."/>
            <person name="Bruce D."/>
            <person name="Han C."/>
            <person name="Tapia R."/>
            <person name="Gilna P."/>
            <person name="Schmutz J."/>
            <person name="Larimer F."/>
            <person name="Land M."/>
            <person name="Hauser L."/>
            <person name="Kyrpides N."/>
            <person name="Kim E."/>
            <person name="Newman D."/>
            <person name="Salticov C."/>
            <person name="Konstantinidis K."/>
            <person name="Klappenback J."/>
            <person name="Tiedje J."/>
            <person name="Richardson P."/>
        </authorList>
    </citation>
    <scope>NUCLEOTIDE SEQUENCE [LARGE SCALE GENOMIC DNA]</scope>
    <source>
        <strain>ANA-3</strain>
    </source>
</reference>
<feature type="chain" id="PRO_1000022758" description="Trigger factor">
    <location>
        <begin position="1"/>
        <end position="434"/>
    </location>
</feature>
<feature type="domain" description="PPIase FKBP-type" evidence="1">
    <location>
        <begin position="160"/>
        <end position="245"/>
    </location>
</feature>
<sequence>MQVSVEATQGLERRLTISVPAEQIEKLVKDSLQREAKRARIPGFRPGKVPVTVINKRYGAAIRQDITGEVMQRNFIEAIIAEKLNPAGAPTFVPGATDGEKFEFVATFEIYPEVELKGLDAIEVEQPKASVTDADVDSMIETLRKQHATFAAVEREAADGDKVKMNFVGSVDGVEFEGGKADDFELQLGSGRMIPGFEAGILGHKAGEEFVIDVTFPEEYHAENLKGKAAKFAITLTEVLAANLPEVNDEFAALFGISEGGLDALKTEIRKNMNRELEQALKANVKEQVITGLLANNDIELPKALIDGEVNVLRQQAMQRFGGQTANMPELPAELFTEQAARRVKIGLLLGEVIKTNELKAEDERVQALIASMASAYEDPSEVVAYYNSNKELMQNMRNVALEEQAVEALLKSAKVTEKEVAFEEFMNKATGRA</sequence>